<reference key="1">
    <citation type="submission" date="2006-10" db="EMBL/GenBank/DDBJ databases">
        <authorList>
            <consortium name="Sanger Xenopus tropicalis EST/cDNA project"/>
        </authorList>
    </citation>
    <scope>NUCLEOTIDE SEQUENCE [LARGE SCALE MRNA]</scope>
    <source>
        <tissue>Egg</tissue>
    </source>
</reference>
<reference key="2">
    <citation type="submission" date="2004-10" db="EMBL/GenBank/DDBJ databases">
        <authorList>
            <consortium name="NIH - Xenopus Gene Collection (XGC) project"/>
        </authorList>
    </citation>
    <scope>NUCLEOTIDE SEQUENCE [LARGE SCALE MRNA]</scope>
    <source>
        <tissue>Embryo</tissue>
    </source>
</reference>
<proteinExistence type="evidence at transcript level"/>
<keyword id="KW-0010">Activator</keyword>
<keyword id="KW-0067">ATP-binding</keyword>
<keyword id="KW-0963">Cytoplasm</keyword>
<keyword id="KW-0238">DNA-binding</keyword>
<keyword id="KW-0269">Exonuclease</keyword>
<keyword id="KW-0347">Helicase</keyword>
<keyword id="KW-0378">Hydrolase</keyword>
<keyword id="KW-0496">Mitochondrion</keyword>
<keyword id="KW-0507">mRNA processing</keyword>
<keyword id="KW-0540">Nuclease</keyword>
<keyword id="KW-0547">Nucleotide-binding</keyword>
<keyword id="KW-0539">Nucleus</keyword>
<keyword id="KW-1185">Reference proteome</keyword>
<keyword id="KW-0694">RNA-binding</keyword>
<keyword id="KW-0804">Transcription</keyword>
<keyword id="KW-0805">Transcription regulation</keyword>
<keyword id="KW-0819">tRNA processing</keyword>
<organism>
    <name type="scientific">Xenopus tropicalis</name>
    <name type="common">Western clawed frog</name>
    <name type="synonym">Silurana tropicalis</name>
    <dbReference type="NCBI Taxonomy" id="8364"/>
    <lineage>
        <taxon>Eukaryota</taxon>
        <taxon>Metazoa</taxon>
        <taxon>Chordata</taxon>
        <taxon>Craniata</taxon>
        <taxon>Vertebrata</taxon>
        <taxon>Euteleostomi</taxon>
        <taxon>Amphibia</taxon>
        <taxon>Batrachia</taxon>
        <taxon>Anura</taxon>
        <taxon>Pipoidea</taxon>
        <taxon>Pipidae</taxon>
        <taxon>Xenopodinae</taxon>
        <taxon>Xenopus</taxon>
        <taxon>Silurana</taxon>
    </lineage>
</organism>
<protein>
    <recommendedName>
        <fullName>ATP-dependent RNA helicase DDX1</fullName>
        <ecNumber>3.6.4.13</ecNumber>
    </recommendedName>
    <alternativeName>
        <fullName>DEAD box protein 1</fullName>
    </alternativeName>
</protein>
<feature type="chain" id="PRO_0000312361" description="ATP-dependent RNA helicase DDX1">
    <location>
        <begin position="1"/>
        <end position="740"/>
    </location>
</feature>
<feature type="domain" description="Helicase ATP-binding" evidence="3">
    <location>
        <begin position="2"/>
        <end position="428"/>
    </location>
</feature>
<feature type="domain" description="B30.2/SPRY" evidence="5">
    <location>
        <begin position="70"/>
        <end position="247"/>
    </location>
</feature>
<feature type="domain" description="Helicase C-terminal" evidence="4">
    <location>
        <begin position="493"/>
        <end position="681"/>
    </location>
</feature>
<feature type="region of interest" description="Interaction with dsRNA" evidence="1">
    <location>
        <begin position="1"/>
        <end position="448"/>
    </location>
</feature>
<feature type="short sequence motif" description="DEAD box" evidence="3">
    <location>
        <begin position="370"/>
        <end position="373"/>
    </location>
</feature>
<feature type="binding site" evidence="3">
    <location>
        <begin position="46"/>
        <end position="53"/>
    </location>
    <ligand>
        <name>ATP</name>
        <dbReference type="ChEBI" id="CHEBI:30616"/>
    </ligand>
</feature>
<dbReference type="EC" id="3.6.4.13"/>
<dbReference type="EMBL" id="CR855610">
    <property type="protein sequence ID" value="CAJ81838.1"/>
    <property type="molecule type" value="mRNA"/>
</dbReference>
<dbReference type="EMBL" id="BC084181">
    <property type="protein sequence ID" value="AAH84181.1"/>
    <property type="molecule type" value="mRNA"/>
</dbReference>
<dbReference type="RefSeq" id="NP_001011133.1">
    <property type="nucleotide sequence ID" value="NM_001011133.2"/>
</dbReference>
<dbReference type="SMR" id="Q5XH91"/>
<dbReference type="FunCoup" id="Q5XH91">
    <property type="interactions" value="2865"/>
</dbReference>
<dbReference type="STRING" id="8364.ENSXETP00000010295"/>
<dbReference type="PaxDb" id="8364-ENSXETP00000038646"/>
<dbReference type="DNASU" id="496549"/>
<dbReference type="GeneID" id="496549"/>
<dbReference type="KEGG" id="xtr:496549"/>
<dbReference type="AGR" id="Xenbase:XB-GENE-969096"/>
<dbReference type="CTD" id="1653"/>
<dbReference type="Xenbase" id="XB-GENE-969096">
    <property type="gene designation" value="ddx1"/>
</dbReference>
<dbReference type="eggNOG" id="KOG0349">
    <property type="taxonomic scope" value="Eukaryota"/>
</dbReference>
<dbReference type="HOGENOM" id="CLU_016321_0_0_1"/>
<dbReference type="InParanoid" id="Q5XH91"/>
<dbReference type="OMA" id="KRQQVKF"/>
<dbReference type="OrthoDB" id="1735at2759"/>
<dbReference type="PhylomeDB" id="Q5XH91"/>
<dbReference type="TreeFam" id="TF106114"/>
<dbReference type="Proteomes" id="UP000008143">
    <property type="component" value="Chromosome 5"/>
</dbReference>
<dbReference type="Bgee" id="ENSXETG00000017825">
    <property type="expression patterns" value="Expressed in ovary and 14 other cell types or tissues"/>
</dbReference>
<dbReference type="GO" id="GO:0005737">
    <property type="term" value="C:cytoplasm"/>
    <property type="evidence" value="ECO:0000250"/>
    <property type="project" value="UniProtKB"/>
</dbReference>
<dbReference type="GO" id="GO:0005829">
    <property type="term" value="C:cytosol"/>
    <property type="evidence" value="ECO:0000250"/>
    <property type="project" value="UniProtKB"/>
</dbReference>
<dbReference type="GO" id="GO:0005739">
    <property type="term" value="C:mitochondrion"/>
    <property type="evidence" value="ECO:0000250"/>
    <property type="project" value="UniProtKB"/>
</dbReference>
<dbReference type="GO" id="GO:0005634">
    <property type="term" value="C:nucleus"/>
    <property type="evidence" value="ECO:0000250"/>
    <property type="project" value="UniProtKB"/>
</dbReference>
<dbReference type="GO" id="GO:0072669">
    <property type="term" value="C:tRNA-splicing ligase complex"/>
    <property type="evidence" value="ECO:0000250"/>
    <property type="project" value="UniProtKB"/>
</dbReference>
<dbReference type="GO" id="GO:0005524">
    <property type="term" value="F:ATP binding"/>
    <property type="evidence" value="ECO:0007669"/>
    <property type="project" value="UniProtKB-KW"/>
</dbReference>
<dbReference type="GO" id="GO:0016887">
    <property type="term" value="F:ATP hydrolysis activity"/>
    <property type="evidence" value="ECO:0007669"/>
    <property type="project" value="RHEA"/>
</dbReference>
<dbReference type="GO" id="GO:0003682">
    <property type="term" value="F:chromatin binding"/>
    <property type="evidence" value="ECO:0000250"/>
    <property type="project" value="UniProtKB"/>
</dbReference>
<dbReference type="GO" id="GO:0003677">
    <property type="term" value="F:DNA binding"/>
    <property type="evidence" value="ECO:0007669"/>
    <property type="project" value="UniProtKB-KW"/>
</dbReference>
<dbReference type="GO" id="GO:0033677">
    <property type="term" value="F:DNA/RNA helicase activity"/>
    <property type="evidence" value="ECO:0000250"/>
    <property type="project" value="UniProtKB"/>
</dbReference>
<dbReference type="GO" id="GO:0004527">
    <property type="term" value="F:exonuclease activity"/>
    <property type="evidence" value="ECO:0007669"/>
    <property type="project" value="UniProtKB-KW"/>
</dbReference>
<dbReference type="GO" id="GO:0004518">
    <property type="term" value="F:nuclease activity"/>
    <property type="evidence" value="ECO:0000250"/>
    <property type="project" value="UniProtKB"/>
</dbReference>
<dbReference type="GO" id="GO:0008143">
    <property type="term" value="F:poly(A) binding"/>
    <property type="evidence" value="ECO:0000250"/>
    <property type="project" value="UniProtKB"/>
</dbReference>
<dbReference type="GO" id="GO:0003724">
    <property type="term" value="F:RNA helicase activity"/>
    <property type="evidence" value="ECO:0000250"/>
    <property type="project" value="UniProtKB"/>
</dbReference>
<dbReference type="GO" id="GO:0003712">
    <property type="term" value="F:transcription coregulator activity"/>
    <property type="evidence" value="ECO:0000250"/>
    <property type="project" value="UniProtKB"/>
</dbReference>
<dbReference type="GO" id="GO:0006302">
    <property type="term" value="P:double-strand break repair"/>
    <property type="evidence" value="ECO:0000250"/>
    <property type="project" value="UniProtKB"/>
</dbReference>
<dbReference type="GO" id="GO:0006397">
    <property type="term" value="P:mRNA processing"/>
    <property type="evidence" value="ECO:0007669"/>
    <property type="project" value="UniProtKB-KW"/>
</dbReference>
<dbReference type="GO" id="GO:0006388">
    <property type="term" value="P:tRNA splicing, via endonucleolytic cleavage and ligation"/>
    <property type="evidence" value="ECO:0000250"/>
    <property type="project" value="UniProtKB"/>
</dbReference>
<dbReference type="CDD" id="cd17938">
    <property type="entry name" value="DEADc_DDX1"/>
    <property type="match status" value="1"/>
</dbReference>
<dbReference type="CDD" id="cd18787">
    <property type="entry name" value="SF2_C_DEAD"/>
    <property type="match status" value="1"/>
</dbReference>
<dbReference type="CDD" id="cd12873">
    <property type="entry name" value="SPRY_DDX1"/>
    <property type="match status" value="1"/>
</dbReference>
<dbReference type="FunFam" id="2.60.120.920:FF:000013">
    <property type="entry name" value="ATP-dependent RNA helicase DDX1"/>
    <property type="match status" value="1"/>
</dbReference>
<dbReference type="FunFam" id="3.40.50.300:FF:000652">
    <property type="entry name" value="ATP-dependent RNA helicase DDX1"/>
    <property type="match status" value="1"/>
</dbReference>
<dbReference type="FunFam" id="3.40.50.300:FF:000708">
    <property type="entry name" value="ATP-dependent RNA helicase DDX1"/>
    <property type="match status" value="1"/>
</dbReference>
<dbReference type="FunFam" id="3.40.50.300:FF:000716">
    <property type="entry name" value="ATP-dependent RNA helicase DDX1"/>
    <property type="match status" value="1"/>
</dbReference>
<dbReference type="Gene3D" id="2.60.120.920">
    <property type="match status" value="1"/>
</dbReference>
<dbReference type="Gene3D" id="3.40.50.300">
    <property type="entry name" value="P-loop containing nucleotide triphosphate hydrolases"/>
    <property type="match status" value="3"/>
</dbReference>
<dbReference type="InterPro" id="IPR001870">
    <property type="entry name" value="B30.2/SPRY"/>
</dbReference>
<dbReference type="InterPro" id="IPR043136">
    <property type="entry name" value="B30.2/SPRY_sf"/>
</dbReference>
<dbReference type="InterPro" id="IPR013320">
    <property type="entry name" value="ConA-like_dom_sf"/>
</dbReference>
<dbReference type="InterPro" id="IPR011545">
    <property type="entry name" value="DEAD/DEAH_box_helicase_dom"/>
</dbReference>
<dbReference type="InterPro" id="IPR014001">
    <property type="entry name" value="Helicase_ATP-bd"/>
</dbReference>
<dbReference type="InterPro" id="IPR001650">
    <property type="entry name" value="Helicase_C-like"/>
</dbReference>
<dbReference type="InterPro" id="IPR027417">
    <property type="entry name" value="P-loop_NTPase"/>
</dbReference>
<dbReference type="InterPro" id="IPR014014">
    <property type="entry name" value="RNA_helicase_DEAD_Q_motif"/>
</dbReference>
<dbReference type="InterPro" id="IPR003877">
    <property type="entry name" value="SPRY_dom"/>
</dbReference>
<dbReference type="PANTHER" id="PTHR24031">
    <property type="entry name" value="RNA HELICASE"/>
    <property type="match status" value="1"/>
</dbReference>
<dbReference type="Pfam" id="PF00270">
    <property type="entry name" value="DEAD"/>
    <property type="match status" value="2"/>
</dbReference>
<dbReference type="Pfam" id="PF00271">
    <property type="entry name" value="Helicase_C"/>
    <property type="match status" value="1"/>
</dbReference>
<dbReference type="Pfam" id="PF00622">
    <property type="entry name" value="SPRY"/>
    <property type="match status" value="1"/>
</dbReference>
<dbReference type="SMART" id="SM00487">
    <property type="entry name" value="DEXDc"/>
    <property type="match status" value="1"/>
</dbReference>
<dbReference type="SMART" id="SM00490">
    <property type="entry name" value="HELICc"/>
    <property type="match status" value="1"/>
</dbReference>
<dbReference type="SMART" id="SM00449">
    <property type="entry name" value="SPRY"/>
    <property type="match status" value="1"/>
</dbReference>
<dbReference type="SUPFAM" id="SSF49899">
    <property type="entry name" value="Concanavalin A-like lectins/glucanases"/>
    <property type="match status" value="1"/>
</dbReference>
<dbReference type="SUPFAM" id="SSF52540">
    <property type="entry name" value="P-loop containing nucleoside triphosphate hydrolases"/>
    <property type="match status" value="2"/>
</dbReference>
<dbReference type="PROSITE" id="PS50188">
    <property type="entry name" value="B302_SPRY"/>
    <property type="match status" value="1"/>
</dbReference>
<dbReference type="PROSITE" id="PS51192">
    <property type="entry name" value="HELICASE_ATP_BIND_1"/>
    <property type="match status" value="2"/>
</dbReference>
<dbReference type="PROSITE" id="PS51194">
    <property type="entry name" value="HELICASE_CTER"/>
    <property type="match status" value="1"/>
</dbReference>
<dbReference type="PROSITE" id="PS51195">
    <property type="entry name" value="Q_MOTIF"/>
    <property type="match status" value="1"/>
</dbReference>
<comment type="function">
    <text evidence="1 2">Acts as an ATP-dependent RNA helicase, able to unwind both RNA-RNA and RNA-DNA duplexes. Possesses 5' single-stranded RNA overhang nuclease activity. Acts as a positive regulator of transcription. May be involved in 3'-end cleavage and polyadenylation of pre-mRNAs. Binds DNA and RNA. Component of the tRNA-splicing ligase complex required to facilitate the enzymatic turnover of catalytic subunit rtcb. Binds (via helicase ATP-binding domain) on both short and long poly(I:C) dsRNA (By similarity).</text>
</comment>
<comment type="catalytic activity">
    <reaction>
        <text>ATP + H2O = ADP + phosphate + H(+)</text>
        <dbReference type="Rhea" id="RHEA:13065"/>
        <dbReference type="ChEBI" id="CHEBI:15377"/>
        <dbReference type="ChEBI" id="CHEBI:15378"/>
        <dbReference type="ChEBI" id="CHEBI:30616"/>
        <dbReference type="ChEBI" id="CHEBI:43474"/>
        <dbReference type="ChEBI" id="CHEBI:456216"/>
        <dbReference type="EC" id="3.6.4.13"/>
    </reaction>
</comment>
<comment type="subcellular location">
    <subcellularLocation>
        <location evidence="2">Nucleus</location>
    </subcellularLocation>
    <subcellularLocation>
        <location evidence="2">Cytoplasm</location>
    </subcellularLocation>
    <subcellularLocation>
        <location evidence="2">Cytoplasmic granule</location>
    </subcellularLocation>
    <subcellularLocation>
        <location evidence="1">Cytoplasm</location>
        <location evidence="1">Cytosol</location>
    </subcellularLocation>
    <subcellularLocation>
        <location evidence="1">Mitochondrion</location>
    </subcellularLocation>
</comment>
<comment type="domain">
    <text evidence="2">The helicase domain is involved in the stimulation of RELA transcriptional activity.</text>
</comment>
<comment type="similarity">
    <text evidence="6">Belongs to the DEAD box helicase family. DDX1 subfamily.</text>
</comment>
<gene>
    <name type="primary">ddx1</name>
    <name type="ORF">TEgg029l11.1</name>
</gene>
<evidence type="ECO:0000250" key="1">
    <source>
        <dbReference type="UniProtKB" id="Q91VR5"/>
    </source>
</evidence>
<evidence type="ECO:0000250" key="2">
    <source>
        <dbReference type="UniProtKB" id="Q92499"/>
    </source>
</evidence>
<evidence type="ECO:0000255" key="3">
    <source>
        <dbReference type="PROSITE-ProRule" id="PRU00541"/>
    </source>
</evidence>
<evidence type="ECO:0000255" key="4">
    <source>
        <dbReference type="PROSITE-ProRule" id="PRU00542"/>
    </source>
</evidence>
<evidence type="ECO:0000255" key="5">
    <source>
        <dbReference type="PROSITE-ProRule" id="PRU00548"/>
    </source>
</evidence>
<evidence type="ECO:0000305" key="6"/>
<accession>Q5XH91</accession>
<name>DDX1_XENTR</name>
<sequence>MAAFSEMGVMAEIAQAVEEMDWLLPTDIQAESIPLILGGGDVLMAAETGSGKTGAFSIPVIQIVYETLKDQQEGKKGKTSVKTGSTVLNKWQMNPYDRGSSFAIGSDGLCCQSREIKEWHGCRSTRGVNKGKYYYEVSCHDQGLCRVGWSTLQASLDLGTDKFGFGFGGTGKKSHNKQFDNYGEEFTMHDTIGCYIDIDNGTVKYSKNGKDLGLAFQIPAHLKNQAVFASCVLKNAELKFNFGEEDFKFPPKDGFVALSKAPDGHVVKSQNTGSAQVSQAKNLPNAPKALIIEPSRELAEQTLNNVKQFKKYVDSPKLRELLIIGGVAAKEQLTLLENGVDIVVGTPGRIDDLISTGKLNLSQVRFLVLDEADGLLSQGYSDFINRIHGQIPQVTSDGKRLQVIVCSATLHSFDVKKLSEKIMHFPTWVDLKGEDSVPETVHHVVVPVNPKKDKQWERLGKNHIRTDGVHDKDNTRPGGNSAEMWSEAIKVLKGEYTVRAIKEHKMDQAIIFCRTKLDCDNMEQYFIQQGGGPDKKGHQFSCVCLHSDRKPQERKHNLERFKKCEVRFLICTDVAARGIDIHGVPYVINVTLPDEKQNYVHRIGRVGRAERMGLAISLVAAEKEKVWYHVCSSRGKGCHNTRLKEDGGCTIWYNETQLLSEIEEHLTCTISQVEPDIKVPLDEFDGKVVYGQRRATGGGLYKGHVDILAPTVQELAALEKEAQTSFLHLGYLSNQLFRTF</sequence>